<evidence type="ECO:0000255" key="1">
    <source>
        <dbReference type="PROSITE-ProRule" id="PRU00335"/>
    </source>
</evidence>
<evidence type="ECO:0000256" key="2">
    <source>
        <dbReference type="SAM" id="MobiDB-lite"/>
    </source>
</evidence>
<evidence type="ECO:0000269" key="3">
    <source>
    </source>
</evidence>
<evidence type="ECO:0000269" key="4">
    <source>
    </source>
</evidence>
<evidence type="ECO:0000305" key="5"/>
<evidence type="ECO:0000312" key="6">
    <source>
        <dbReference type="EMBL" id="CCP43424.1"/>
    </source>
</evidence>
<evidence type="ECO:0007744" key="7">
    <source>
    </source>
</evidence>
<comment type="PTM">
    <text evidence="3">Phosphorylated on Thr-57 by PknH.</text>
</comment>
<comment type="sequence caution" evidence="4">
    <conflict type="erroneous initiation">
        <sequence resource="EMBL-CDS" id="CCP43424"/>
    </conflict>
    <text>Truncated N-terminus.</text>
</comment>
<organism>
    <name type="scientific">Mycobacterium tuberculosis (strain ATCC 25618 / H37Rv)</name>
    <dbReference type="NCBI Taxonomy" id="83332"/>
    <lineage>
        <taxon>Bacteria</taxon>
        <taxon>Bacillati</taxon>
        <taxon>Actinomycetota</taxon>
        <taxon>Actinomycetes</taxon>
        <taxon>Mycobacteriales</taxon>
        <taxon>Mycobacteriaceae</taxon>
        <taxon>Mycobacterium</taxon>
        <taxon>Mycobacterium tuberculosis complex</taxon>
    </lineage>
</organism>
<dbReference type="EMBL" id="AL123456">
    <property type="protein sequence ID" value="CCP43424.1"/>
    <property type="status" value="ALT_INIT"/>
    <property type="molecule type" value="Genomic_DNA"/>
</dbReference>
<dbReference type="RefSeq" id="NP_215195.1">
    <property type="nucleotide sequence ID" value="NC_000962.3"/>
</dbReference>
<dbReference type="SMR" id="O53789"/>
<dbReference type="STRING" id="83332.Rv0681"/>
<dbReference type="iPTMnet" id="O53789"/>
<dbReference type="PaxDb" id="83332-Rv0681"/>
<dbReference type="DNASU" id="888239"/>
<dbReference type="GeneID" id="888239"/>
<dbReference type="KEGG" id="mtu:Rv0681"/>
<dbReference type="PATRIC" id="fig|83332.111.peg.756"/>
<dbReference type="TubercuList" id="Rv0681"/>
<dbReference type="eggNOG" id="COG1309">
    <property type="taxonomic scope" value="Bacteria"/>
</dbReference>
<dbReference type="InParanoid" id="O53789"/>
<dbReference type="OrthoDB" id="71867at2"/>
<dbReference type="PhylomeDB" id="O53789"/>
<dbReference type="SABIO-RK" id="O53789"/>
<dbReference type="Proteomes" id="UP000001584">
    <property type="component" value="Chromosome"/>
</dbReference>
<dbReference type="GO" id="GO:0005886">
    <property type="term" value="C:plasma membrane"/>
    <property type="evidence" value="ECO:0007005"/>
    <property type="project" value="MTBBASE"/>
</dbReference>
<dbReference type="GO" id="GO:0003700">
    <property type="term" value="F:DNA-binding transcription factor activity"/>
    <property type="evidence" value="ECO:0000318"/>
    <property type="project" value="GO_Central"/>
</dbReference>
<dbReference type="GO" id="GO:0000976">
    <property type="term" value="F:transcription cis-regulatory region binding"/>
    <property type="evidence" value="ECO:0000318"/>
    <property type="project" value="GO_Central"/>
</dbReference>
<dbReference type="GO" id="GO:0006355">
    <property type="term" value="P:regulation of DNA-templated transcription"/>
    <property type="evidence" value="ECO:0000318"/>
    <property type="project" value="GO_Central"/>
</dbReference>
<dbReference type="FunFam" id="1.10.357.10:FF:000015">
    <property type="entry name" value="TetR family transcriptional regulator"/>
    <property type="match status" value="1"/>
</dbReference>
<dbReference type="Gene3D" id="1.10.10.60">
    <property type="entry name" value="Homeodomain-like"/>
    <property type="match status" value="1"/>
</dbReference>
<dbReference type="Gene3D" id="1.10.357.10">
    <property type="entry name" value="Tetracycline Repressor, domain 2"/>
    <property type="match status" value="1"/>
</dbReference>
<dbReference type="InterPro" id="IPR009057">
    <property type="entry name" value="Homeodomain-like_sf"/>
</dbReference>
<dbReference type="InterPro" id="IPR050109">
    <property type="entry name" value="HTH-type_TetR-like_transc_reg"/>
</dbReference>
<dbReference type="InterPro" id="IPR001647">
    <property type="entry name" value="HTH_TetR"/>
</dbReference>
<dbReference type="InterPro" id="IPR025996">
    <property type="entry name" value="MT1864/Rv1816-like_C"/>
</dbReference>
<dbReference type="InterPro" id="IPR036271">
    <property type="entry name" value="Tet_transcr_reg_TetR-rel_C_sf"/>
</dbReference>
<dbReference type="PANTHER" id="PTHR30055">
    <property type="entry name" value="HTH-TYPE TRANSCRIPTIONAL REGULATOR RUTR"/>
    <property type="match status" value="1"/>
</dbReference>
<dbReference type="PANTHER" id="PTHR30055:SF151">
    <property type="entry name" value="TRANSCRIPTIONAL REGULATORY PROTEIN"/>
    <property type="match status" value="1"/>
</dbReference>
<dbReference type="Pfam" id="PF13305">
    <property type="entry name" value="TetR_C_33"/>
    <property type="match status" value="1"/>
</dbReference>
<dbReference type="SUPFAM" id="SSF46689">
    <property type="entry name" value="Homeodomain-like"/>
    <property type="match status" value="1"/>
</dbReference>
<dbReference type="SUPFAM" id="SSF48498">
    <property type="entry name" value="Tetracyclin repressor-like, C-terminal domain"/>
    <property type="match status" value="1"/>
</dbReference>
<dbReference type="PROSITE" id="PS50977">
    <property type="entry name" value="HTH_TETR_2"/>
    <property type="match status" value="1"/>
</dbReference>
<keyword id="KW-0903">Direct protein sequencing</keyword>
<keyword id="KW-0238">DNA-binding</keyword>
<keyword id="KW-0597">Phosphoprotein</keyword>
<keyword id="KW-1185">Reference proteome</keyword>
<keyword id="KW-0804">Transcription</keyword>
<keyword id="KW-0805">Transcription regulation</keyword>
<gene>
    <name evidence="6" type="ordered locus">Rv0681</name>
</gene>
<name>Y681_MYCTU</name>
<reference key="1">
    <citation type="journal article" date="1998" name="Nature">
        <title>Deciphering the biology of Mycobacterium tuberculosis from the complete genome sequence.</title>
        <authorList>
            <person name="Cole S.T."/>
            <person name="Brosch R."/>
            <person name="Parkhill J."/>
            <person name="Garnier T."/>
            <person name="Churcher C.M."/>
            <person name="Harris D.E."/>
            <person name="Gordon S.V."/>
            <person name="Eiglmeier K."/>
            <person name="Gas S."/>
            <person name="Barry C.E. III"/>
            <person name="Tekaia F."/>
            <person name="Badcock K."/>
            <person name="Basham D."/>
            <person name="Brown D."/>
            <person name="Chillingworth T."/>
            <person name="Connor R."/>
            <person name="Davies R.M."/>
            <person name="Devlin K."/>
            <person name="Feltwell T."/>
            <person name="Gentles S."/>
            <person name="Hamlin N."/>
            <person name="Holroyd S."/>
            <person name="Hornsby T."/>
            <person name="Jagels K."/>
            <person name="Krogh A."/>
            <person name="McLean J."/>
            <person name="Moule S."/>
            <person name="Murphy L.D."/>
            <person name="Oliver S."/>
            <person name="Osborne J."/>
            <person name="Quail M.A."/>
            <person name="Rajandream M.A."/>
            <person name="Rogers J."/>
            <person name="Rutter S."/>
            <person name="Seeger K."/>
            <person name="Skelton S."/>
            <person name="Squares S."/>
            <person name="Squares R."/>
            <person name="Sulston J.E."/>
            <person name="Taylor K."/>
            <person name="Whitehead S."/>
            <person name="Barrell B.G."/>
        </authorList>
    </citation>
    <scope>NUCLEOTIDE SEQUENCE [LARGE SCALE GENOMIC DNA]</scope>
    <source>
        <strain>ATCC 25618 / H37Rv</strain>
    </source>
</reference>
<reference key="2">
    <citation type="journal article" date="2022" name="Genomics">
        <title>Deep N-terminomics of Mycobacterium tuberculosis H37Rv extensively correct annotated encoding genes.</title>
        <authorList>
            <person name="Shi J."/>
            <person name="Meng S."/>
            <person name="Wan L."/>
            <person name="Zhang Z."/>
            <person name="Jiang S."/>
            <person name="Zhu H."/>
            <person name="Dai E."/>
            <person name="Chang L."/>
            <person name="Gao H."/>
            <person name="Wan K."/>
            <person name="Zhang L."/>
            <person name="Zhao X."/>
            <person name="Liu H."/>
            <person name="Lyu Z."/>
            <person name="Zhang Y."/>
            <person name="Xu P."/>
        </authorList>
    </citation>
    <scope>PROTEIN SEQUENCE OF 2-15</scope>
    <scope>SEQUENCE REVISION TO N-TERMINUS</scope>
    <source>
        <strain>H37Rv</strain>
    </source>
</reference>
<reference key="3">
    <citation type="journal article" date="2007" name="Biochem. Biophys. Res. Commun.">
        <title>Novel substrates of Mycobacterium tuberculosis PknH Ser/Thr kinase.</title>
        <authorList>
            <person name="Zheng X."/>
            <person name="Papavinasasundaram K.G."/>
            <person name="Av-Gay Y."/>
        </authorList>
    </citation>
    <scope>PHOSPHORYLATION AT THR-57</scope>
    <scope>MUTAGENESIS OF THR-57</scope>
    <source>
        <strain>ATCC 25618 / H37Rv</strain>
    </source>
</reference>
<reference evidence="7" key="4">
    <citation type="journal article" date="2011" name="Mol. Cell. Proteomics">
        <title>Proteogenomic analysis of Mycobacterium tuberculosis by high resolution mass spectrometry.</title>
        <authorList>
            <person name="Kelkar D.S."/>
            <person name="Kumar D."/>
            <person name="Kumar P."/>
            <person name="Balakrishnan L."/>
            <person name="Muthusamy B."/>
            <person name="Yadav A.K."/>
            <person name="Shrivastava P."/>
            <person name="Marimuthu A."/>
            <person name="Anand S."/>
            <person name="Sundaram H."/>
            <person name="Kingsbury R."/>
            <person name="Harsha H.C."/>
            <person name="Nair B."/>
            <person name="Prasad T.S."/>
            <person name="Chauhan D.S."/>
            <person name="Katoch K."/>
            <person name="Katoch V.M."/>
            <person name="Kumar P."/>
            <person name="Chaerkady R."/>
            <person name="Ramachandran S."/>
            <person name="Dash D."/>
            <person name="Pandey A."/>
        </authorList>
    </citation>
    <scope>IDENTIFICATION BY MASS SPECTROMETRY [LARGE SCALE ANALYSIS]</scope>
</reference>
<accession>O53789</accession>
<accession>I6XVZ1</accession>
<protein>
    <recommendedName>
        <fullName evidence="5">Uncharacterized HTH-type transcriptional regulator Rv0681</fullName>
    </recommendedName>
</protein>
<feature type="initiator methionine" description="Removed" evidence="4">
    <location>
        <position position="1"/>
    </location>
</feature>
<feature type="chain" id="PRO_0000450669" description="Uncharacterized HTH-type transcriptional regulator Rv0681">
    <location>
        <begin position="2"/>
        <end position="218"/>
    </location>
</feature>
<feature type="domain" description="HTH tetR-type" evidence="1">
    <location>
        <begin position="28"/>
        <end position="88"/>
    </location>
</feature>
<feature type="DNA-binding region" description="H-T-H motif" evidence="1">
    <location>
        <begin position="51"/>
        <end position="70"/>
    </location>
</feature>
<feature type="region of interest" description="Disordered" evidence="2">
    <location>
        <begin position="1"/>
        <end position="24"/>
    </location>
</feature>
<feature type="modified residue" description="Phosphothreonine; by PknH" evidence="3">
    <location>
        <position position="57"/>
    </location>
</feature>
<feature type="mutagenesis site" description="Almost completely abolishes phosphorylation by PknH." evidence="3">
    <original>T</original>
    <variation>A</variation>
    <location>
        <position position="57"/>
    </location>
</feature>
<proteinExistence type="evidence at protein level"/>
<sequence>MAAQPQAPSAGGRPRAGKAVKSVARPAKLSRESIVEGALTFLDREGWDSLTINALATQLGTKGPSLYNHVDSLEDLRRAVRIRVIDDIITMLNRVGAGRARDDAVLVMAGAYRSYAHHHPGRYSAFTRMPLGGDDPEYTAATRGAAAPVIAVLSSYGLDGEQAFYAALEFWSALHGFVLLEMTGVMDDIDTDAVFTDMVLRLAAGMERRTTHGGTAST</sequence>